<protein>
    <recommendedName>
        <fullName evidence="5">Putative anti-anti-sigma factor Rv2638</fullName>
    </recommendedName>
</protein>
<comment type="subunit">
    <text evidence="2">Interacts with unphosphorylated OprA.</text>
</comment>
<comment type="induction">
    <text evidence="3">Slightly induced towards stationary phase. Induced by heat and oxidative stresses.</text>
</comment>
<comment type="similarity">
    <text evidence="4">Belongs to the anti-sigma-factor antagonist family.</text>
</comment>
<organism>
    <name type="scientific">Mycobacterium tuberculosis (strain ATCC 25618 / H37Rv)</name>
    <dbReference type="NCBI Taxonomy" id="83332"/>
    <lineage>
        <taxon>Bacteria</taxon>
        <taxon>Bacillati</taxon>
        <taxon>Actinomycetota</taxon>
        <taxon>Actinomycetes</taxon>
        <taxon>Mycobacteriales</taxon>
        <taxon>Mycobacteriaceae</taxon>
        <taxon>Mycobacterium</taxon>
        <taxon>Mycobacterium tuberculosis complex</taxon>
    </lineage>
</organism>
<name>Y2638_MYCTU</name>
<proteinExistence type="evidence at protein level"/>
<keyword id="KW-1185">Reference proteome</keyword>
<keyword id="KW-0346">Stress response</keyword>
<dbReference type="EMBL" id="AL123456">
    <property type="protein sequence ID" value="CCP45436.1"/>
    <property type="molecule type" value="Genomic_DNA"/>
</dbReference>
<dbReference type="RefSeq" id="NP_217154.1">
    <property type="nucleotide sequence ID" value="NC_000962.3"/>
</dbReference>
<dbReference type="RefSeq" id="WP_003413657.1">
    <property type="nucleotide sequence ID" value="NZ_NVQJ01000077.1"/>
</dbReference>
<dbReference type="SMR" id="I6X4W0"/>
<dbReference type="FunCoup" id="I6X4W0">
    <property type="interactions" value="2"/>
</dbReference>
<dbReference type="STRING" id="83332.Rv2638"/>
<dbReference type="PaxDb" id="83332-Rv2638"/>
<dbReference type="DNASU" id="888156"/>
<dbReference type="GeneID" id="888156"/>
<dbReference type="KEGG" id="mtu:Rv2638"/>
<dbReference type="KEGG" id="mtv:RVBD_2638"/>
<dbReference type="PATRIC" id="fig|83332.111.peg.2942"/>
<dbReference type="TubercuList" id="Rv2638"/>
<dbReference type="eggNOG" id="COG1366">
    <property type="taxonomic scope" value="Bacteria"/>
</dbReference>
<dbReference type="InParanoid" id="I6X4W0"/>
<dbReference type="OrthoDB" id="3700428at2"/>
<dbReference type="PhylomeDB" id="I6X4W0"/>
<dbReference type="Proteomes" id="UP000001584">
    <property type="component" value="Chromosome"/>
</dbReference>
<dbReference type="GO" id="GO:0043856">
    <property type="term" value="F:anti-sigma factor antagonist activity"/>
    <property type="evidence" value="ECO:0000318"/>
    <property type="project" value="GO_Central"/>
</dbReference>
<dbReference type="CDD" id="cd07043">
    <property type="entry name" value="STAS_anti-anti-sigma_factors"/>
    <property type="match status" value="1"/>
</dbReference>
<dbReference type="FunFam" id="3.30.750.24:FF:000032">
    <property type="entry name" value="Anti-sigma factor antagonist"/>
    <property type="match status" value="1"/>
</dbReference>
<dbReference type="Gene3D" id="3.30.750.24">
    <property type="entry name" value="STAS domain"/>
    <property type="match status" value="1"/>
</dbReference>
<dbReference type="InterPro" id="IPR003658">
    <property type="entry name" value="Anti-sigma_ant"/>
</dbReference>
<dbReference type="InterPro" id="IPR002645">
    <property type="entry name" value="STAS_dom"/>
</dbReference>
<dbReference type="InterPro" id="IPR036513">
    <property type="entry name" value="STAS_dom_sf"/>
</dbReference>
<dbReference type="NCBIfam" id="TIGR00377">
    <property type="entry name" value="ant_ant_sig"/>
    <property type="match status" value="1"/>
</dbReference>
<dbReference type="PANTHER" id="PTHR33495:SF2">
    <property type="entry name" value="ANTI-SIGMA FACTOR ANTAGONIST TM_1081-RELATED"/>
    <property type="match status" value="1"/>
</dbReference>
<dbReference type="PANTHER" id="PTHR33495">
    <property type="entry name" value="ANTI-SIGMA FACTOR ANTAGONIST TM_1081-RELATED-RELATED"/>
    <property type="match status" value="1"/>
</dbReference>
<dbReference type="Pfam" id="PF01740">
    <property type="entry name" value="STAS"/>
    <property type="match status" value="1"/>
</dbReference>
<dbReference type="SUPFAM" id="SSF52091">
    <property type="entry name" value="SpoIIaa-like"/>
    <property type="match status" value="1"/>
</dbReference>
<dbReference type="PROSITE" id="PS50801">
    <property type="entry name" value="STAS"/>
    <property type="match status" value="1"/>
</dbReference>
<sequence length="148" mass="15420">MGLITTEPRSSPHPLSPRLVHELGDPHSTLRATTDGSGAALLIHAGGEIDGRNEHLWRQLVTEAAAGVTAPGPLIVDVTGLDFMGCCAFAALADEAQRCRCRGIDLRLVSHQPIVARIAEAGGLSRVLPIYPTVDTALGKGTAGPARC</sequence>
<evidence type="ECO:0000255" key="1">
    <source>
        <dbReference type="PROSITE-ProRule" id="PRU00198"/>
    </source>
</evidence>
<evidence type="ECO:0000269" key="2">
    <source>
    </source>
</evidence>
<evidence type="ECO:0000269" key="3">
    <source>
    </source>
</evidence>
<evidence type="ECO:0000305" key="4"/>
<evidence type="ECO:0000305" key="5">
    <source>
    </source>
</evidence>
<evidence type="ECO:0000312" key="6">
    <source>
        <dbReference type="EMBL" id="CCP45436.1"/>
    </source>
</evidence>
<gene>
    <name evidence="6" type="ordered locus">Rv2638</name>
</gene>
<accession>I6X4W0</accession>
<reference key="1">
    <citation type="journal article" date="1998" name="Nature">
        <title>Deciphering the biology of Mycobacterium tuberculosis from the complete genome sequence.</title>
        <authorList>
            <person name="Cole S.T."/>
            <person name="Brosch R."/>
            <person name="Parkhill J."/>
            <person name="Garnier T."/>
            <person name="Churcher C.M."/>
            <person name="Harris D.E."/>
            <person name="Gordon S.V."/>
            <person name="Eiglmeier K."/>
            <person name="Gas S."/>
            <person name="Barry C.E. III"/>
            <person name="Tekaia F."/>
            <person name="Badcock K."/>
            <person name="Basham D."/>
            <person name="Brown D."/>
            <person name="Chillingworth T."/>
            <person name="Connor R."/>
            <person name="Davies R.M."/>
            <person name="Devlin K."/>
            <person name="Feltwell T."/>
            <person name="Gentles S."/>
            <person name="Hamlin N."/>
            <person name="Holroyd S."/>
            <person name="Hornsby T."/>
            <person name="Jagels K."/>
            <person name="Krogh A."/>
            <person name="McLean J."/>
            <person name="Moule S."/>
            <person name="Murphy L.D."/>
            <person name="Oliver S."/>
            <person name="Osborne J."/>
            <person name="Quail M.A."/>
            <person name="Rajandream M.A."/>
            <person name="Rogers J."/>
            <person name="Rutter S."/>
            <person name="Seeger K."/>
            <person name="Skelton S."/>
            <person name="Squares S."/>
            <person name="Squares R."/>
            <person name="Sulston J.E."/>
            <person name="Taylor K."/>
            <person name="Whitehead S."/>
            <person name="Barrell B.G."/>
        </authorList>
    </citation>
    <scope>NUCLEOTIDE SEQUENCE [LARGE SCALE GENOMIC DNA]</scope>
    <source>
        <strain>ATCC 25618 / H37Rv</strain>
    </source>
</reference>
<reference key="2">
    <citation type="journal article" date="2007" name="PLoS Pathog.">
        <title>M. tuberculosis Ser/Thr protein kinase D phosphorylates an anti-anti-sigma factor homolog.</title>
        <authorList>
            <person name="Greenstein A.E."/>
            <person name="MacGurn J.A."/>
            <person name="Baer C.E."/>
            <person name="Falick A.M."/>
            <person name="Cox J.S."/>
            <person name="Alber T."/>
        </authorList>
    </citation>
    <scope>INTERACTION WITH OPRA/RV0516C</scope>
</reference>
<reference key="3">
    <citation type="journal article" date="2007" name="Front. Biosci.">
        <title>Stress response of genes encoding putative stress signaling molecules of Mycobacterium tuberculosis.</title>
        <authorList>
            <person name="Dhandayuthapani S."/>
        </authorList>
    </citation>
    <scope>INDUCTION</scope>
</reference>
<feature type="chain" id="PRO_0000451031" description="Putative anti-anti-sigma factor Rv2638">
    <location>
        <begin position="1"/>
        <end position="148"/>
    </location>
</feature>
<feature type="domain" description="STAS" evidence="1">
    <location>
        <begin position="30"/>
        <end position="141"/>
    </location>
</feature>